<organism>
    <name type="scientific">Burkholderia pseudomallei (strain K96243)</name>
    <dbReference type="NCBI Taxonomy" id="272560"/>
    <lineage>
        <taxon>Bacteria</taxon>
        <taxon>Pseudomonadati</taxon>
        <taxon>Pseudomonadota</taxon>
        <taxon>Betaproteobacteria</taxon>
        <taxon>Burkholderiales</taxon>
        <taxon>Burkholderiaceae</taxon>
        <taxon>Burkholderia</taxon>
        <taxon>pseudomallei group</taxon>
    </lineage>
</organism>
<reference key="1">
    <citation type="journal article" date="2004" name="Proc. Natl. Acad. Sci. U.S.A.">
        <title>Genomic plasticity of the causative agent of melioidosis, Burkholderia pseudomallei.</title>
        <authorList>
            <person name="Holden M.T.G."/>
            <person name="Titball R.W."/>
            <person name="Peacock S.J."/>
            <person name="Cerdeno-Tarraga A.-M."/>
            <person name="Atkins T."/>
            <person name="Crossman L.C."/>
            <person name="Pitt T."/>
            <person name="Churcher C."/>
            <person name="Mungall K.L."/>
            <person name="Bentley S.D."/>
            <person name="Sebaihia M."/>
            <person name="Thomson N.R."/>
            <person name="Bason N."/>
            <person name="Beacham I.R."/>
            <person name="Brooks K."/>
            <person name="Brown K.A."/>
            <person name="Brown N.F."/>
            <person name="Challis G.L."/>
            <person name="Cherevach I."/>
            <person name="Chillingworth T."/>
            <person name="Cronin A."/>
            <person name="Crossett B."/>
            <person name="Davis P."/>
            <person name="DeShazer D."/>
            <person name="Feltwell T."/>
            <person name="Fraser A."/>
            <person name="Hance Z."/>
            <person name="Hauser H."/>
            <person name="Holroyd S."/>
            <person name="Jagels K."/>
            <person name="Keith K.E."/>
            <person name="Maddison M."/>
            <person name="Moule S."/>
            <person name="Price C."/>
            <person name="Quail M.A."/>
            <person name="Rabbinowitsch E."/>
            <person name="Rutherford K."/>
            <person name="Sanders M."/>
            <person name="Simmonds M."/>
            <person name="Songsivilai S."/>
            <person name="Stevens K."/>
            <person name="Tumapa S."/>
            <person name="Vesaratchavest M."/>
            <person name="Whitehead S."/>
            <person name="Yeats C."/>
            <person name="Barrell B.G."/>
            <person name="Oyston P.C.F."/>
            <person name="Parkhill J."/>
        </authorList>
    </citation>
    <scope>NUCLEOTIDE SEQUENCE [LARGE SCALE GENOMIC DNA]</scope>
    <source>
        <strain>K96243</strain>
    </source>
</reference>
<feature type="chain" id="PRO_0000233748" description="Bifunctional protein GlmU">
    <location>
        <begin position="1"/>
        <end position="453"/>
    </location>
</feature>
<feature type="region of interest" description="Pyrophosphorylase" evidence="1">
    <location>
        <begin position="1"/>
        <end position="225"/>
    </location>
</feature>
<feature type="region of interest" description="Linker" evidence="1">
    <location>
        <begin position="226"/>
        <end position="246"/>
    </location>
</feature>
<feature type="region of interest" description="N-acetyltransferase" evidence="1">
    <location>
        <begin position="247"/>
        <end position="453"/>
    </location>
</feature>
<feature type="active site" description="Proton acceptor" evidence="1">
    <location>
        <position position="359"/>
    </location>
</feature>
<feature type="binding site" evidence="1">
    <location>
        <begin position="6"/>
        <end position="9"/>
    </location>
    <ligand>
        <name>UDP-N-acetyl-alpha-D-glucosamine</name>
        <dbReference type="ChEBI" id="CHEBI:57705"/>
    </ligand>
</feature>
<feature type="binding site" evidence="1">
    <location>
        <position position="20"/>
    </location>
    <ligand>
        <name>UDP-N-acetyl-alpha-D-glucosamine</name>
        <dbReference type="ChEBI" id="CHEBI:57705"/>
    </ligand>
</feature>
<feature type="binding site" evidence="1">
    <location>
        <position position="71"/>
    </location>
    <ligand>
        <name>UDP-N-acetyl-alpha-D-glucosamine</name>
        <dbReference type="ChEBI" id="CHEBI:57705"/>
    </ligand>
</feature>
<feature type="binding site" evidence="1">
    <location>
        <begin position="76"/>
        <end position="77"/>
    </location>
    <ligand>
        <name>UDP-N-acetyl-alpha-D-glucosamine</name>
        <dbReference type="ChEBI" id="CHEBI:57705"/>
    </ligand>
</feature>
<feature type="binding site" evidence="1">
    <location>
        <begin position="98"/>
        <end position="100"/>
    </location>
    <ligand>
        <name>UDP-N-acetyl-alpha-D-glucosamine</name>
        <dbReference type="ChEBI" id="CHEBI:57705"/>
    </ligand>
</feature>
<feature type="binding site" evidence="1">
    <location>
        <position position="100"/>
    </location>
    <ligand>
        <name>Mg(2+)</name>
        <dbReference type="ChEBI" id="CHEBI:18420"/>
    </ligand>
</feature>
<feature type="binding site" evidence="1">
    <location>
        <position position="135"/>
    </location>
    <ligand>
        <name>UDP-N-acetyl-alpha-D-glucosamine</name>
        <dbReference type="ChEBI" id="CHEBI:57705"/>
    </ligand>
</feature>
<feature type="binding site" evidence="1">
    <location>
        <position position="150"/>
    </location>
    <ligand>
        <name>UDP-N-acetyl-alpha-D-glucosamine</name>
        <dbReference type="ChEBI" id="CHEBI:57705"/>
    </ligand>
</feature>
<feature type="binding site" evidence="1">
    <location>
        <position position="165"/>
    </location>
    <ligand>
        <name>UDP-N-acetyl-alpha-D-glucosamine</name>
        <dbReference type="ChEBI" id="CHEBI:57705"/>
    </ligand>
</feature>
<feature type="binding site" evidence="1">
    <location>
        <position position="223"/>
    </location>
    <ligand>
        <name>Mg(2+)</name>
        <dbReference type="ChEBI" id="CHEBI:18420"/>
    </ligand>
</feature>
<feature type="binding site" evidence="1">
    <location>
        <position position="223"/>
    </location>
    <ligand>
        <name>UDP-N-acetyl-alpha-D-glucosamine</name>
        <dbReference type="ChEBI" id="CHEBI:57705"/>
    </ligand>
</feature>
<feature type="binding site" evidence="1">
    <location>
        <position position="329"/>
    </location>
    <ligand>
        <name>UDP-N-acetyl-alpha-D-glucosamine</name>
        <dbReference type="ChEBI" id="CHEBI:57705"/>
    </ligand>
</feature>
<feature type="binding site" evidence="1">
    <location>
        <position position="347"/>
    </location>
    <ligand>
        <name>UDP-N-acetyl-alpha-D-glucosamine</name>
        <dbReference type="ChEBI" id="CHEBI:57705"/>
    </ligand>
</feature>
<feature type="binding site" evidence="1">
    <location>
        <position position="362"/>
    </location>
    <ligand>
        <name>UDP-N-acetyl-alpha-D-glucosamine</name>
        <dbReference type="ChEBI" id="CHEBI:57705"/>
    </ligand>
</feature>
<feature type="binding site" evidence="1">
    <location>
        <position position="373"/>
    </location>
    <ligand>
        <name>UDP-N-acetyl-alpha-D-glucosamine</name>
        <dbReference type="ChEBI" id="CHEBI:57705"/>
    </ligand>
</feature>
<feature type="binding site" evidence="1">
    <location>
        <position position="376"/>
    </location>
    <ligand>
        <name>acetyl-CoA</name>
        <dbReference type="ChEBI" id="CHEBI:57288"/>
    </ligand>
</feature>
<feature type="binding site" evidence="1">
    <location>
        <begin position="382"/>
        <end position="383"/>
    </location>
    <ligand>
        <name>acetyl-CoA</name>
        <dbReference type="ChEBI" id="CHEBI:57288"/>
    </ligand>
</feature>
<feature type="binding site" evidence="1">
    <location>
        <position position="401"/>
    </location>
    <ligand>
        <name>acetyl-CoA</name>
        <dbReference type="ChEBI" id="CHEBI:57288"/>
    </ligand>
</feature>
<feature type="binding site" evidence="1">
    <location>
        <position position="419"/>
    </location>
    <ligand>
        <name>acetyl-CoA</name>
        <dbReference type="ChEBI" id="CHEBI:57288"/>
    </ligand>
</feature>
<accession>Q63Y75</accession>
<keyword id="KW-0012">Acyltransferase</keyword>
<keyword id="KW-0133">Cell shape</keyword>
<keyword id="KW-0961">Cell wall biogenesis/degradation</keyword>
<keyword id="KW-0963">Cytoplasm</keyword>
<keyword id="KW-0460">Magnesium</keyword>
<keyword id="KW-0479">Metal-binding</keyword>
<keyword id="KW-0511">Multifunctional enzyme</keyword>
<keyword id="KW-0548">Nucleotidyltransferase</keyword>
<keyword id="KW-0573">Peptidoglycan synthesis</keyword>
<keyword id="KW-1185">Reference proteome</keyword>
<keyword id="KW-0677">Repeat</keyword>
<keyword id="KW-0808">Transferase</keyword>
<name>GLMU_BURPS</name>
<protein>
    <recommendedName>
        <fullName evidence="1">Bifunctional protein GlmU</fullName>
    </recommendedName>
    <domain>
        <recommendedName>
            <fullName evidence="1">UDP-N-acetylglucosamine pyrophosphorylase</fullName>
            <ecNumber evidence="1">2.7.7.23</ecNumber>
        </recommendedName>
        <alternativeName>
            <fullName evidence="1">N-acetylglucosamine-1-phosphate uridyltransferase</fullName>
        </alternativeName>
    </domain>
    <domain>
        <recommendedName>
            <fullName evidence="1">Glucosamine-1-phosphate N-acetyltransferase</fullName>
            <ecNumber evidence="1">2.3.1.157</ecNumber>
        </recommendedName>
    </domain>
</protein>
<dbReference type="EC" id="2.7.7.23" evidence="1"/>
<dbReference type="EC" id="2.3.1.157" evidence="1"/>
<dbReference type="EMBL" id="BX571965">
    <property type="protein sequence ID" value="CAH34302.1"/>
    <property type="molecule type" value="Genomic_DNA"/>
</dbReference>
<dbReference type="RefSeq" id="WP_004531007.1">
    <property type="nucleotide sequence ID" value="NZ_CP009538.1"/>
</dbReference>
<dbReference type="RefSeq" id="YP_106940.1">
    <property type="nucleotide sequence ID" value="NC_006350.1"/>
</dbReference>
<dbReference type="SMR" id="Q63Y75"/>
<dbReference type="STRING" id="272560.BPSL0313"/>
<dbReference type="KEGG" id="bps:BPSL0313"/>
<dbReference type="PATRIC" id="fig|272560.51.peg.1375"/>
<dbReference type="eggNOG" id="COG1207">
    <property type="taxonomic scope" value="Bacteria"/>
</dbReference>
<dbReference type="UniPathway" id="UPA00113">
    <property type="reaction ID" value="UER00532"/>
</dbReference>
<dbReference type="UniPathway" id="UPA00113">
    <property type="reaction ID" value="UER00533"/>
</dbReference>
<dbReference type="UniPathway" id="UPA00973"/>
<dbReference type="Proteomes" id="UP000000605">
    <property type="component" value="Chromosome 1"/>
</dbReference>
<dbReference type="GO" id="GO:0005737">
    <property type="term" value="C:cytoplasm"/>
    <property type="evidence" value="ECO:0007669"/>
    <property type="project" value="UniProtKB-SubCell"/>
</dbReference>
<dbReference type="GO" id="GO:0016020">
    <property type="term" value="C:membrane"/>
    <property type="evidence" value="ECO:0007669"/>
    <property type="project" value="GOC"/>
</dbReference>
<dbReference type="GO" id="GO:0019134">
    <property type="term" value="F:glucosamine-1-phosphate N-acetyltransferase activity"/>
    <property type="evidence" value="ECO:0007669"/>
    <property type="project" value="UniProtKB-UniRule"/>
</dbReference>
<dbReference type="GO" id="GO:0000287">
    <property type="term" value="F:magnesium ion binding"/>
    <property type="evidence" value="ECO:0007669"/>
    <property type="project" value="UniProtKB-UniRule"/>
</dbReference>
<dbReference type="GO" id="GO:0003977">
    <property type="term" value="F:UDP-N-acetylglucosamine diphosphorylase activity"/>
    <property type="evidence" value="ECO:0007669"/>
    <property type="project" value="UniProtKB-UniRule"/>
</dbReference>
<dbReference type="GO" id="GO:0000902">
    <property type="term" value="P:cell morphogenesis"/>
    <property type="evidence" value="ECO:0007669"/>
    <property type="project" value="UniProtKB-UniRule"/>
</dbReference>
<dbReference type="GO" id="GO:0071555">
    <property type="term" value="P:cell wall organization"/>
    <property type="evidence" value="ECO:0007669"/>
    <property type="project" value="UniProtKB-KW"/>
</dbReference>
<dbReference type="GO" id="GO:0009245">
    <property type="term" value="P:lipid A biosynthetic process"/>
    <property type="evidence" value="ECO:0007669"/>
    <property type="project" value="UniProtKB-UniRule"/>
</dbReference>
<dbReference type="GO" id="GO:0009252">
    <property type="term" value="P:peptidoglycan biosynthetic process"/>
    <property type="evidence" value="ECO:0007669"/>
    <property type="project" value="UniProtKB-UniRule"/>
</dbReference>
<dbReference type="GO" id="GO:0008360">
    <property type="term" value="P:regulation of cell shape"/>
    <property type="evidence" value="ECO:0007669"/>
    <property type="project" value="UniProtKB-KW"/>
</dbReference>
<dbReference type="GO" id="GO:0006048">
    <property type="term" value="P:UDP-N-acetylglucosamine biosynthetic process"/>
    <property type="evidence" value="ECO:0007669"/>
    <property type="project" value="UniProtKB-UniPathway"/>
</dbReference>
<dbReference type="CDD" id="cd02540">
    <property type="entry name" value="GT2_GlmU_N_bac"/>
    <property type="match status" value="1"/>
</dbReference>
<dbReference type="CDD" id="cd03353">
    <property type="entry name" value="LbH_GlmU_C"/>
    <property type="match status" value="1"/>
</dbReference>
<dbReference type="Gene3D" id="2.160.10.10">
    <property type="entry name" value="Hexapeptide repeat proteins"/>
    <property type="match status" value="1"/>
</dbReference>
<dbReference type="Gene3D" id="3.90.550.10">
    <property type="entry name" value="Spore Coat Polysaccharide Biosynthesis Protein SpsA, Chain A"/>
    <property type="match status" value="1"/>
</dbReference>
<dbReference type="HAMAP" id="MF_01631">
    <property type="entry name" value="GlmU"/>
    <property type="match status" value="1"/>
</dbReference>
<dbReference type="InterPro" id="IPR005882">
    <property type="entry name" value="Bifunctional_GlmU"/>
</dbReference>
<dbReference type="InterPro" id="IPR050065">
    <property type="entry name" value="GlmU-like"/>
</dbReference>
<dbReference type="InterPro" id="IPR038009">
    <property type="entry name" value="GlmU_C_LbH"/>
</dbReference>
<dbReference type="InterPro" id="IPR001451">
    <property type="entry name" value="Hexapep"/>
</dbReference>
<dbReference type="InterPro" id="IPR025877">
    <property type="entry name" value="MobA-like_NTP_Trfase"/>
</dbReference>
<dbReference type="InterPro" id="IPR029044">
    <property type="entry name" value="Nucleotide-diphossugar_trans"/>
</dbReference>
<dbReference type="InterPro" id="IPR011004">
    <property type="entry name" value="Trimer_LpxA-like_sf"/>
</dbReference>
<dbReference type="NCBIfam" id="TIGR01173">
    <property type="entry name" value="glmU"/>
    <property type="match status" value="1"/>
</dbReference>
<dbReference type="PANTHER" id="PTHR43584:SF3">
    <property type="entry name" value="BIFUNCTIONAL PROTEIN GLMU"/>
    <property type="match status" value="1"/>
</dbReference>
<dbReference type="PANTHER" id="PTHR43584">
    <property type="entry name" value="NUCLEOTIDYL TRANSFERASE"/>
    <property type="match status" value="1"/>
</dbReference>
<dbReference type="Pfam" id="PF00132">
    <property type="entry name" value="Hexapep"/>
    <property type="match status" value="2"/>
</dbReference>
<dbReference type="Pfam" id="PF12804">
    <property type="entry name" value="NTP_transf_3"/>
    <property type="match status" value="1"/>
</dbReference>
<dbReference type="SUPFAM" id="SSF53448">
    <property type="entry name" value="Nucleotide-diphospho-sugar transferases"/>
    <property type="match status" value="1"/>
</dbReference>
<dbReference type="SUPFAM" id="SSF51161">
    <property type="entry name" value="Trimeric LpxA-like enzymes"/>
    <property type="match status" value="1"/>
</dbReference>
<proteinExistence type="inferred from homology"/>
<gene>
    <name evidence="1" type="primary">glmU</name>
    <name type="ordered locus">BPSL0313</name>
</gene>
<comment type="function">
    <text evidence="1">Catalyzes the last two sequential reactions in the de novo biosynthetic pathway for UDP-N-acetylglucosamine (UDP-GlcNAc). The C-terminal domain catalyzes the transfer of acetyl group from acetyl coenzyme A to glucosamine-1-phosphate (GlcN-1-P) to produce N-acetylglucosamine-1-phosphate (GlcNAc-1-P), which is converted into UDP-GlcNAc by the transfer of uridine 5-monophosphate (from uridine 5-triphosphate), a reaction catalyzed by the N-terminal domain.</text>
</comment>
<comment type="catalytic activity">
    <reaction evidence="1">
        <text>alpha-D-glucosamine 1-phosphate + acetyl-CoA = N-acetyl-alpha-D-glucosamine 1-phosphate + CoA + H(+)</text>
        <dbReference type="Rhea" id="RHEA:13725"/>
        <dbReference type="ChEBI" id="CHEBI:15378"/>
        <dbReference type="ChEBI" id="CHEBI:57287"/>
        <dbReference type="ChEBI" id="CHEBI:57288"/>
        <dbReference type="ChEBI" id="CHEBI:57776"/>
        <dbReference type="ChEBI" id="CHEBI:58516"/>
        <dbReference type="EC" id="2.3.1.157"/>
    </reaction>
</comment>
<comment type="catalytic activity">
    <reaction evidence="1">
        <text>N-acetyl-alpha-D-glucosamine 1-phosphate + UTP + H(+) = UDP-N-acetyl-alpha-D-glucosamine + diphosphate</text>
        <dbReference type="Rhea" id="RHEA:13509"/>
        <dbReference type="ChEBI" id="CHEBI:15378"/>
        <dbReference type="ChEBI" id="CHEBI:33019"/>
        <dbReference type="ChEBI" id="CHEBI:46398"/>
        <dbReference type="ChEBI" id="CHEBI:57705"/>
        <dbReference type="ChEBI" id="CHEBI:57776"/>
        <dbReference type="EC" id="2.7.7.23"/>
    </reaction>
</comment>
<comment type="cofactor">
    <cofactor evidence="1">
        <name>Mg(2+)</name>
        <dbReference type="ChEBI" id="CHEBI:18420"/>
    </cofactor>
    <text evidence="1">Binds 1 Mg(2+) ion per subunit.</text>
</comment>
<comment type="pathway">
    <text evidence="1">Nucleotide-sugar biosynthesis; UDP-N-acetyl-alpha-D-glucosamine biosynthesis; N-acetyl-alpha-D-glucosamine 1-phosphate from alpha-D-glucosamine 6-phosphate (route II): step 2/2.</text>
</comment>
<comment type="pathway">
    <text evidence="1">Nucleotide-sugar biosynthesis; UDP-N-acetyl-alpha-D-glucosamine biosynthesis; UDP-N-acetyl-alpha-D-glucosamine from N-acetyl-alpha-D-glucosamine 1-phosphate: step 1/1.</text>
</comment>
<comment type="pathway">
    <text evidence="1">Bacterial outer membrane biogenesis; LPS lipid A biosynthesis.</text>
</comment>
<comment type="subunit">
    <text evidence="1">Homotrimer.</text>
</comment>
<comment type="subcellular location">
    <subcellularLocation>
        <location evidence="1">Cytoplasm</location>
    </subcellularLocation>
</comment>
<comment type="similarity">
    <text evidence="1">In the N-terminal section; belongs to the N-acetylglucosamine-1-phosphate uridyltransferase family.</text>
</comment>
<comment type="similarity">
    <text evidence="1">In the C-terminal section; belongs to the transferase hexapeptide repeat family.</text>
</comment>
<evidence type="ECO:0000255" key="1">
    <source>
        <dbReference type="HAMAP-Rule" id="MF_01631"/>
    </source>
</evidence>
<sequence length="453" mass="47508">MNIVILAAGTGKRMRSALPKVLHPLAGRPLLSHVIDTARALAPSRLVVVIGHGAEQVRAAVAAPDVQFAVQEQQLGTGHAVRQALPLLDPSQPTLVLYGDVPLTRTATLKRLADAATDARYGVLTVTLDDPTGYGRIVRDQAGCVTRIVEQKDASPDELRIDEINTGIVVAPTAQLSMWLGALGNDNAQGEYYLTDVVEQAIEAGFEIVTTQPDDGWETLGVNSKAQLAELERIHQRNLADALLAAGVTLADPARIDVRGTLACGRDVSIDVNCVFEGDVTLADGVTIGANCVIRHAAIAAGARVDAFSHLDGATVGANAVVGPYARLRPGAVLAADAHVGNFVEVKNATLGQGSKANHLTYLGDADIGARVNVGAGTITCNYDGANKFRTVIEDDVFVGSDTQFVAPVRVGRGVTVAAGTTVWKDVAADMLVLNDKTQTAKSGYVRPVKKKS</sequence>